<name>ATPB1_GLUOX</name>
<reference key="1">
    <citation type="journal article" date="2005" name="Nat. Biotechnol.">
        <title>Complete genome sequence of the acetic acid bacterium Gluconobacter oxydans.</title>
        <authorList>
            <person name="Prust C."/>
            <person name="Hoffmeister M."/>
            <person name="Liesegang H."/>
            <person name="Wiezer A."/>
            <person name="Fricke W.F."/>
            <person name="Ehrenreich A."/>
            <person name="Gottschalk G."/>
            <person name="Deppenmeier U."/>
        </authorList>
    </citation>
    <scope>NUCLEOTIDE SEQUENCE [LARGE SCALE GENOMIC DNA]</scope>
    <source>
        <strain>621H</strain>
    </source>
</reference>
<dbReference type="EC" id="7.1.2.2" evidence="1"/>
<dbReference type="EMBL" id="CP000009">
    <property type="protein sequence ID" value="AAW61071.1"/>
    <property type="molecule type" value="Genomic_DNA"/>
</dbReference>
<dbReference type="SMR" id="Q5FRC5"/>
<dbReference type="STRING" id="290633.GOX1313"/>
<dbReference type="KEGG" id="gox:GOX1313"/>
<dbReference type="eggNOG" id="COG0055">
    <property type="taxonomic scope" value="Bacteria"/>
</dbReference>
<dbReference type="HOGENOM" id="CLU_022398_0_2_5"/>
<dbReference type="Proteomes" id="UP000006375">
    <property type="component" value="Chromosome"/>
</dbReference>
<dbReference type="GO" id="GO:0005886">
    <property type="term" value="C:plasma membrane"/>
    <property type="evidence" value="ECO:0007669"/>
    <property type="project" value="UniProtKB-SubCell"/>
</dbReference>
<dbReference type="GO" id="GO:0045259">
    <property type="term" value="C:proton-transporting ATP synthase complex"/>
    <property type="evidence" value="ECO:0007669"/>
    <property type="project" value="UniProtKB-KW"/>
</dbReference>
<dbReference type="GO" id="GO:0005524">
    <property type="term" value="F:ATP binding"/>
    <property type="evidence" value="ECO:0007669"/>
    <property type="project" value="UniProtKB-UniRule"/>
</dbReference>
<dbReference type="GO" id="GO:0016887">
    <property type="term" value="F:ATP hydrolysis activity"/>
    <property type="evidence" value="ECO:0007669"/>
    <property type="project" value="InterPro"/>
</dbReference>
<dbReference type="GO" id="GO:0046933">
    <property type="term" value="F:proton-transporting ATP synthase activity, rotational mechanism"/>
    <property type="evidence" value="ECO:0007669"/>
    <property type="project" value="UniProtKB-UniRule"/>
</dbReference>
<dbReference type="CDD" id="cd18110">
    <property type="entry name" value="ATP-synt_F1_beta_C"/>
    <property type="match status" value="1"/>
</dbReference>
<dbReference type="CDD" id="cd18115">
    <property type="entry name" value="ATP-synt_F1_beta_N"/>
    <property type="match status" value="1"/>
</dbReference>
<dbReference type="CDD" id="cd01133">
    <property type="entry name" value="F1-ATPase_beta_CD"/>
    <property type="match status" value="1"/>
</dbReference>
<dbReference type="FunFam" id="1.10.1140.10:FF:000001">
    <property type="entry name" value="ATP synthase subunit beta"/>
    <property type="match status" value="1"/>
</dbReference>
<dbReference type="FunFam" id="2.40.10.170:FF:000005">
    <property type="entry name" value="ATP synthase subunit beta"/>
    <property type="match status" value="1"/>
</dbReference>
<dbReference type="FunFam" id="3.40.50.300:FF:000026">
    <property type="entry name" value="ATP synthase subunit beta"/>
    <property type="match status" value="1"/>
</dbReference>
<dbReference type="Gene3D" id="2.40.10.170">
    <property type="match status" value="1"/>
</dbReference>
<dbReference type="Gene3D" id="1.10.1140.10">
    <property type="entry name" value="Bovine Mitochondrial F1-atpase, Atp Synthase Beta Chain, Chain D, domain 3"/>
    <property type="match status" value="1"/>
</dbReference>
<dbReference type="Gene3D" id="3.40.50.300">
    <property type="entry name" value="P-loop containing nucleotide triphosphate hydrolases"/>
    <property type="match status" value="1"/>
</dbReference>
<dbReference type="HAMAP" id="MF_01347">
    <property type="entry name" value="ATP_synth_beta_bact"/>
    <property type="match status" value="1"/>
</dbReference>
<dbReference type="InterPro" id="IPR003593">
    <property type="entry name" value="AAA+_ATPase"/>
</dbReference>
<dbReference type="InterPro" id="IPR055190">
    <property type="entry name" value="ATP-synt_VA_C"/>
</dbReference>
<dbReference type="InterPro" id="IPR005722">
    <property type="entry name" value="ATP_synth_F1_bsu"/>
</dbReference>
<dbReference type="InterPro" id="IPR020003">
    <property type="entry name" value="ATPase_a/bsu_AS"/>
</dbReference>
<dbReference type="InterPro" id="IPR050053">
    <property type="entry name" value="ATPase_alpha/beta_chains"/>
</dbReference>
<dbReference type="InterPro" id="IPR004100">
    <property type="entry name" value="ATPase_F1/V1/A1_a/bsu_N"/>
</dbReference>
<dbReference type="InterPro" id="IPR036121">
    <property type="entry name" value="ATPase_F1/V1/A1_a/bsu_N_sf"/>
</dbReference>
<dbReference type="InterPro" id="IPR000194">
    <property type="entry name" value="ATPase_F1/V1/A1_a/bsu_nucl-bd"/>
</dbReference>
<dbReference type="InterPro" id="IPR024034">
    <property type="entry name" value="ATPase_F1/V1_b/a_C"/>
</dbReference>
<dbReference type="InterPro" id="IPR027417">
    <property type="entry name" value="P-loop_NTPase"/>
</dbReference>
<dbReference type="NCBIfam" id="TIGR01039">
    <property type="entry name" value="atpD"/>
    <property type="match status" value="1"/>
</dbReference>
<dbReference type="PANTHER" id="PTHR15184">
    <property type="entry name" value="ATP SYNTHASE"/>
    <property type="match status" value="1"/>
</dbReference>
<dbReference type="PANTHER" id="PTHR15184:SF71">
    <property type="entry name" value="ATP SYNTHASE SUBUNIT BETA, MITOCHONDRIAL"/>
    <property type="match status" value="1"/>
</dbReference>
<dbReference type="Pfam" id="PF00006">
    <property type="entry name" value="ATP-synt_ab"/>
    <property type="match status" value="1"/>
</dbReference>
<dbReference type="Pfam" id="PF02874">
    <property type="entry name" value="ATP-synt_ab_N"/>
    <property type="match status" value="1"/>
</dbReference>
<dbReference type="Pfam" id="PF22919">
    <property type="entry name" value="ATP-synt_VA_C"/>
    <property type="match status" value="1"/>
</dbReference>
<dbReference type="PIRSF" id="PIRSF039072">
    <property type="entry name" value="ATPase_subunit_beta"/>
    <property type="match status" value="1"/>
</dbReference>
<dbReference type="SMART" id="SM00382">
    <property type="entry name" value="AAA"/>
    <property type="match status" value="1"/>
</dbReference>
<dbReference type="SUPFAM" id="SSF47917">
    <property type="entry name" value="C-terminal domain of alpha and beta subunits of F1 ATP synthase"/>
    <property type="match status" value="1"/>
</dbReference>
<dbReference type="SUPFAM" id="SSF50615">
    <property type="entry name" value="N-terminal domain of alpha and beta subunits of F1 ATP synthase"/>
    <property type="match status" value="1"/>
</dbReference>
<dbReference type="SUPFAM" id="SSF52540">
    <property type="entry name" value="P-loop containing nucleoside triphosphate hydrolases"/>
    <property type="match status" value="1"/>
</dbReference>
<dbReference type="PROSITE" id="PS00152">
    <property type="entry name" value="ATPASE_ALPHA_BETA"/>
    <property type="match status" value="1"/>
</dbReference>
<evidence type="ECO:0000255" key="1">
    <source>
        <dbReference type="HAMAP-Rule" id="MF_01347"/>
    </source>
</evidence>
<protein>
    <recommendedName>
        <fullName evidence="1">ATP synthase subunit beta 1</fullName>
        <ecNumber evidence="1">7.1.2.2</ecNumber>
    </recommendedName>
    <alternativeName>
        <fullName evidence="1">ATP synthase F1 sector subunit beta 1</fullName>
    </alternativeName>
    <alternativeName>
        <fullName evidence="1">F-ATPase subunit beta 1</fullName>
    </alternativeName>
</protein>
<keyword id="KW-0066">ATP synthesis</keyword>
<keyword id="KW-0067">ATP-binding</keyword>
<keyword id="KW-0997">Cell inner membrane</keyword>
<keyword id="KW-1003">Cell membrane</keyword>
<keyword id="KW-0139">CF(1)</keyword>
<keyword id="KW-0375">Hydrogen ion transport</keyword>
<keyword id="KW-0406">Ion transport</keyword>
<keyword id="KW-0472">Membrane</keyword>
<keyword id="KW-0547">Nucleotide-binding</keyword>
<keyword id="KW-1185">Reference proteome</keyword>
<keyword id="KW-1278">Translocase</keyword>
<keyword id="KW-0813">Transport</keyword>
<gene>
    <name evidence="1" type="primary">atpD1</name>
    <name type="ordered locus">GOX1313</name>
</gene>
<proteinExistence type="inferred from homology"/>
<organism>
    <name type="scientific">Gluconobacter oxydans (strain 621H)</name>
    <name type="common">Gluconobacter suboxydans</name>
    <dbReference type="NCBI Taxonomy" id="290633"/>
    <lineage>
        <taxon>Bacteria</taxon>
        <taxon>Pseudomonadati</taxon>
        <taxon>Pseudomonadota</taxon>
        <taxon>Alphaproteobacteria</taxon>
        <taxon>Acetobacterales</taxon>
        <taxon>Acetobacteraceae</taxon>
        <taxon>Gluconobacter</taxon>
    </lineage>
</organism>
<sequence>MSETLTPSAGAANNVVGRVTQVRGPVVDVQFEGDLPFILNALHVQNGDHTLVLEVAQEIGERQVRCIAMDTTDGLVRGTEVRDTGKQIMVPVGPATLGRILNVVGEPIDERGPISSELRFPIHRPAPSFEEQAAASEILVTGIKVVDLLCPYLKGGKIGLFGGAGVGKTVIIQELINNIAKAHGGVSVFAGVGERTREGNDLYFEMQDAGVIKIAEDGSTEGSKVALVYGQMNEPPGARSRVALTGLSLAEYFRDEEGQDVLFFVDNIFRFTQAGSEVSALLGRIPSAVGYQPTLATEMGALQERITSTKKGSITSVQAVYVPADDLTDPAPAATFAHLDATTVLNRSIAEMGIYPAVDPLDSTSRSLDPKIVGEEHYQVARQVQQTLQTYKGLQDIIAILGMDELSEDDKKIVGRARRIQRFLSQPFHVAEVFTGAPGKLVSLEDTIRSFKAVVAGEYDHLPEGAFYMVGDIDEAIAKAEKMKQEA</sequence>
<feature type="chain" id="PRO_0000254271" description="ATP synthase subunit beta 1">
    <location>
        <begin position="1"/>
        <end position="487"/>
    </location>
</feature>
<feature type="binding site" evidence="1">
    <location>
        <begin position="162"/>
        <end position="169"/>
    </location>
    <ligand>
        <name>ATP</name>
        <dbReference type="ChEBI" id="CHEBI:30616"/>
    </ligand>
</feature>
<accession>Q5FRC5</accession>
<comment type="function">
    <text evidence="1">Produces ATP from ADP in the presence of a proton gradient across the membrane. The catalytic sites are hosted primarily by the beta subunits.</text>
</comment>
<comment type="catalytic activity">
    <reaction evidence="1">
        <text>ATP + H2O + 4 H(+)(in) = ADP + phosphate + 5 H(+)(out)</text>
        <dbReference type="Rhea" id="RHEA:57720"/>
        <dbReference type="ChEBI" id="CHEBI:15377"/>
        <dbReference type="ChEBI" id="CHEBI:15378"/>
        <dbReference type="ChEBI" id="CHEBI:30616"/>
        <dbReference type="ChEBI" id="CHEBI:43474"/>
        <dbReference type="ChEBI" id="CHEBI:456216"/>
        <dbReference type="EC" id="7.1.2.2"/>
    </reaction>
</comment>
<comment type="subunit">
    <text evidence="1">F-type ATPases have 2 components, CF(1) - the catalytic core - and CF(0) - the membrane proton channel. CF(1) has five subunits: alpha(3), beta(3), gamma(1), delta(1), epsilon(1). CF(0) has three main subunits: a(1), b(2) and c(9-12). The alpha and beta chains form an alternating ring which encloses part of the gamma chain. CF(1) is attached to CF(0) by a central stalk formed by the gamma and epsilon chains, while a peripheral stalk is formed by the delta and b chains.</text>
</comment>
<comment type="subcellular location">
    <subcellularLocation>
        <location evidence="1">Cell inner membrane</location>
        <topology evidence="1">Peripheral membrane protein</topology>
    </subcellularLocation>
</comment>
<comment type="similarity">
    <text evidence="1">Belongs to the ATPase alpha/beta chains family.</text>
</comment>